<reference key="1">
    <citation type="journal article" date="2008" name="J. Bacteriol.">
        <title>Insights into the environmental resistance gene pool from the genome sequence of the multidrug-resistant environmental isolate Escherichia coli SMS-3-5.</title>
        <authorList>
            <person name="Fricke W.F."/>
            <person name="Wright M.S."/>
            <person name="Lindell A.H."/>
            <person name="Harkins D.M."/>
            <person name="Baker-Austin C."/>
            <person name="Ravel J."/>
            <person name="Stepanauskas R."/>
        </authorList>
    </citation>
    <scope>NUCLEOTIDE SEQUENCE [LARGE SCALE GENOMIC DNA]</scope>
    <source>
        <strain>SMS-3-5 / SECEC</strain>
    </source>
</reference>
<protein>
    <recommendedName>
        <fullName evidence="1">RNA 3'-terminal phosphate cyclase</fullName>
        <shortName evidence="1">RNA cyclase</shortName>
        <shortName evidence="1">RNA-3'-phosphate cyclase</shortName>
        <ecNumber evidence="1">6.5.1.4</ecNumber>
    </recommendedName>
</protein>
<feature type="chain" id="PRO_1000118704" description="RNA 3'-terminal phosphate cyclase">
    <location>
        <begin position="1"/>
        <end position="338"/>
    </location>
</feature>
<feature type="active site" description="Tele-AMP-histidine intermediate" evidence="1">
    <location>
        <position position="308"/>
    </location>
</feature>
<feature type="binding site" evidence="1">
    <location>
        <position position="103"/>
    </location>
    <ligand>
        <name>ATP</name>
        <dbReference type="ChEBI" id="CHEBI:30616"/>
    </ligand>
</feature>
<feature type="binding site" evidence="1">
    <location>
        <begin position="283"/>
        <end position="287"/>
    </location>
    <ligand>
        <name>ATP</name>
        <dbReference type="ChEBI" id="CHEBI:30616"/>
    </ligand>
</feature>
<comment type="function">
    <text evidence="1">Catalyzes the conversion of 3'-phosphate to a 2',3'-cyclic phosphodiester at the end of RNA. The mechanism of action of the enzyme occurs in 3 steps: (A) adenylation of the enzyme by ATP; (B) transfer of adenylate to an RNA-N3'P to produce RNA-N3'PP5'A; (C) and attack of the adjacent 2'-hydroxyl on the 3'-phosphorus in the diester linkage to produce the cyclic end product. The biological role of this enzyme is unknown but it is likely to function in some aspects of cellular RNA processing.</text>
</comment>
<comment type="catalytic activity">
    <reaction evidence="1">
        <text>a 3'-end 3'-phospho-ribonucleotide-RNA + ATP = a 3'-end 2',3'-cyclophospho-ribonucleotide-RNA + AMP + diphosphate</text>
        <dbReference type="Rhea" id="RHEA:23976"/>
        <dbReference type="Rhea" id="RHEA-COMP:10463"/>
        <dbReference type="Rhea" id="RHEA-COMP:10464"/>
        <dbReference type="ChEBI" id="CHEBI:30616"/>
        <dbReference type="ChEBI" id="CHEBI:33019"/>
        <dbReference type="ChEBI" id="CHEBI:83062"/>
        <dbReference type="ChEBI" id="CHEBI:83064"/>
        <dbReference type="ChEBI" id="CHEBI:456215"/>
        <dbReference type="EC" id="6.5.1.4"/>
    </reaction>
</comment>
<comment type="subcellular location">
    <subcellularLocation>
        <location evidence="1">Cytoplasm</location>
    </subcellularLocation>
</comment>
<comment type="similarity">
    <text evidence="1">Belongs to the RNA 3'-terminal cyclase family. Type 1 subfamily.</text>
</comment>
<accession>B1LI80</accession>
<name>RTCA_ECOSM</name>
<organism>
    <name type="scientific">Escherichia coli (strain SMS-3-5 / SECEC)</name>
    <dbReference type="NCBI Taxonomy" id="439855"/>
    <lineage>
        <taxon>Bacteria</taxon>
        <taxon>Pseudomonadati</taxon>
        <taxon>Pseudomonadota</taxon>
        <taxon>Gammaproteobacteria</taxon>
        <taxon>Enterobacterales</taxon>
        <taxon>Enterobacteriaceae</taxon>
        <taxon>Escherichia</taxon>
    </lineage>
</organism>
<proteinExistence type="inferred from homology"/>
<dbReference type="EC" id="6.5.1.4" evidence="1"/>
<dbReference type="EMBL" id="CP000970">
    <property type="protein sequence ID" value="ACB16602.1"/>
    <property type="molecule type" value="Genomic_DNA"/>
</dbReference>
<dbReference type="RefSeq" id="WP_012311674.1">
    <property type="nucleotide sequence ID" value="NC_010498.1"/>
</dbReference>
<dbReference type="SMR" id="B1LI80"/>
<dbReference type="KEGG" id="ecm:EcSMS35_3700"/>
<dbReference type="HOGENOM" id="CLU_027882_0_0_6"/>
<dbReference type="Proteomes" id="UP000007011">
    <property type="component" value="Chromosome"/>
</dbReference>
<dbReference type="GO" id="GO:0005737">
    <property type="term" value="C:cytoplasm"/>
    <property type="evidence" value="ECO:0007669"/>
    <property type="project" value="UniProtKB-SubCell"/>
</dbReference>
<dbReference type="GO" id="GO:0005524">
    <property type="term" value="F:ATP binding"/>
    <property type="evidence" value="ECO:0007669"/>
    <property type="project" value="UniProtKB-KW"/>
</dbReference>
<dbReference type="GO" id="GO:0003963">
    <property type="term" value="F:RNA-3'-phosphate cyclase activity"/>
    <property type="evidence" value="ECO:0007669"/>
    <property type="project" value="UniProtKB-UniRule"/>
</dbReference>
<dbReference type="GO" id="GO:0006396">
    <property type="term" value="P:RNA processing"/>
    <property type="evidence" value="ECO:0007669"/>
    <property type="project" value="InterPro"/>
</dbReference>
<dbReference type="FunFam" id="3.65.10.20:FF:000002">
    <property type="entry name" value="GM19193"/>
    <property type="match status" value="1"/>
</dbReference>
<dbReference type="FunFam" id="3.30.360.20:FF:000003">
    <property type="entry name" value="RNA 3'-terminal phosphate cyclase"/>
    <property type="match status" value="1"/>
</dbReference>
<dbReference type="Gene3D" id="3.65.10.20">
    <property type="entry name" value="RNA 3'-terminal phosphate cyclase domain"/>
    <property type="match status" value="1"/>
</dbReference>
<dbReference type="Gene3D" id="3.30.360.20">
    <property type="entry name" value="RNA 3'-terminal phosphate cyclase, insert domain"/>
    <property type="match status" value="1"/>
</dbReference>
<dbReference type="HAMAP" id="MF_00200">
    <property type="entry name" value="RTC"/>
    <property type="match status" value="1"/>
</dbReference>
<dbReference type="InterPro" id="IPR013791">
    <property type="entry name" value="RNA3'-term_phos_cycl_insert"/>
</dbReference>
<dbReference type="InterPro" id="IPR023797">
    <property type="entry name" value="RNA3'_phos_cyclase_dom"/>
</dbReference>
<dbReference type="InterPro" id="IPR037136">
    <property type="entry name" value="RNA3'_phos_cyclase_dom_sf"/>
</dbReference>
<dbReference type="InterPro" id="IPR000228">
    <property type="entry name" value="RNA3'_term_phos_cyc"/>
</dbReference>
<dbReference type="InterPro" id="IPR017770">
    <property type="entry name" value="RNA3'_term_phos_cyc_type_1"/>
</dbReference>
<dbReference type="InterPro" id="IPR020719">
    <property type="entry name" value="RNA3'_term_phos_cycl-like_CS"/>
</dbReference>
<dbReference type="InterPro" id="IPR013792">
    <property type="entry name" value="RNA3'P_cycl/enolpyr_Trfase_a/b"/>
</dbReference>
<dbReference type="InterPro" id="IPR036553">
    <property type="entry name" value="RPTC_insert"/>
</dbReference>
<dbReference type="NCBIfam" id="NF003246">
    <property type="entry name" value="PRK04204.1-2"/>
    <property type="match status" value="1"/>
</dbReference>
<dbReference type="NCBIfam" id="NF003247">
    <property type="entry name" value="PRK04204.1-3"/>
    <property type="match status" value="1"/>
</dbReference>
<dbReference type="NCBIfam" id="TIGR03399">
    <property type="entry name" value="RNA_3prim_cycl"/>
    <property type="match status" value="1"/>
</dbReference>
<dbReference type="PANTHER" id="PTHR11096">
    <property type="entry name" value="RNA 3' TERMINAL PHOSPHATE CYCLASE"/>
    <property type="match status" value="1"/>
</dbReference>
<dbReference type="PANTHER" id="PTHR11096:SF0">
    <property type="entry name" value="RNA 3'-TERMINAL PHOSPHATE CYCLASE"/>
    <property type="match status" value="1"/>
</dbReference>
<dbReference type="Pfam" id="PF01137">
    <property type="entry name" value="RTC"/>
    <property type="match status" value="1"/>
</dbReference>
<dbReference type="Pfam" id="PF05189">
    <property type="entry name" value="RTC_insert"/>
    <property type="match status" value="1"/>
</dbReference>
<dbReference type="PIRSF" id="PIRSF005378">
    <property type="entry name" value="RNA3'_term_phos_cycl_euk"/>
    <property type="match status" value="1"/>
</dbReference>
<dbReference type="SUPFAM" id="SSF55205">
    <property type="entry name" value="EPT/RTPC-like"/>
    <property type="match status" value="2"/>
</dbReference>
<dbReference type="SUPFAM" id="SSF52913">
    <property type="entry name" value="RNA 3'-terminal phosphate cyclase, RPTC, insert domain"/>
    <property type="match status" value="1"/>
</dbReference>
<dbReference type="PROSITE" id="PS01287">
    <property type="entry name" value="RTC"/>
    <property type="match status" value="1"/>
</dbReference>
<gene>
    <name evidence="1" type="primary">rtcA</name>
    <name type="ordered locus">EcSMS35_3700</name>
</gene>
<keyword id="KW-0067">ATP-binding</keyword>
<keyword id="KW-0963">Cytoplasm</keyword>
<keyword id="KW-0436">Ligase</keyword>
<keyword id="KW-0547">Nucleotide-binding</keyword>
<sequence length="338" mass="35921">MKRMIALDGAQGEGGGQILRSALSLSMITGLPFTITGIRAGRAKPGLLRQHLTAVKAAAEICRATVEGAELGSQRLLFRPGTVRGGDYRFAIGSAGSCTLVLQTVLPALWFADGPSRVEVSGGTDNPSAPPADFIRRVLEPLLAKMGIHQQTTLIRHGFYPAGGGVVATEVSPVALFNTLQLGERGNIVQMRGEVLLAGVPRHVAEREIATLVGSFSLHEQNIHNLPRDQGPGNTVSLEVESENITERFFVVGEKRVSAEVVAAQLVKEVKRYLASPAAVGEYLADQLVLPMALAGAGEFTVAHPSCHLLTNIAVVERFLPVRFGLVEADGVTRVSIE</sequence>
<evidence type="ECO:0000255" key="1">
    <source>
        <dbReference type="HAMAP-Rule" id="MF_00200"/>
    </source>
</evidence>